<dbReference type="EMBL" id="CP000469">
    <property type="protein sequence ID" value="ABK47289.1"/>
    <property type="molecule type" value="Genomic_DNA"/>
</dbReference>
<dbReference type="RefSeq" id="WP_011716162.1">
    <property type="nucleotide sequence ID" value="NC_008577.1"/>
</dbReference>
<dbReference type="SMR" id="A0KU20"/>
<dbReference type="STRING" id="94122.Shewana3_1054"/>
<dbReference type="KEGG" id="shn:Shewana3_1054"/>
<dbReference type="eggNOG" id="COG3381">
    <property type="taxonomic scope" value="Bacteria"/>
</dbReference>
<dbReference type="HOGENOM" id="CLU_077650_4_0_6"/>
<dbReference type="OrthoDB" id="7849731at2"/>
<dbReference type="Proteomes" id="UP000002589">
    <property type="component" value="Chromosome"/>
</dbReference>
<dbReference type="GO" id="GO:0005737">
    <property type="term" value="C:cytoplasm"/>
    <property type="evidence" value="ECO:0007669"/>
    <property type="project" value="UniProtKB-SubCell"/>
</dbReference>
<dbReference type="GO" id="GO:0051259">
    <property type="term" value="P:protein complex oligomerization"/>
    <property type="evidence" value="ECO:0007669"/>
    <property type="project" value="InterPro"/>
</dbReference>
<dbReference type="GO" id="GO:0006457">
    <property type="term" value="P:protein folding"/>
    <property type="evidence" value="ECO:0007669"/>
    <property type="project" value="UniProtKB-UniRule"/>
</dbReference>
<dbReference type="Gene3D" id="1.20.120.1820">
    <property type="match status" value="1"/>
</dbReference>
<dbReference type="Gene3D" id="1.20.1280.20">
    <property type="entry name" value="HscB, C-terminal domain"/>
    <property type="match status" value="1"/>
</dbReference>
<dbReference type="HAMAP" id="MF_01150">
    <property type="entry name" value="TorD"/>
    <property type="match status" value="1"/>
</dbReference>
<dbReference type="InterPro" id="IPR023069">
    <property type="entry name" value="Chaperone_TorD"/>
</dbReference>
<dbReference type="InterPro" id="IPR020945">
    <property type="entry name" value="DMSO/NO3_reduct_chaperone"/>
</dbReference>
<dbReference type="InterPro" id="IPR036386">
    <property type="entry name" value="HscB_C_sf"/>
</dbReference>
<dbReference type="InterPro" id="IPR036411">
    <property type="entry name" value="TorD-like_sf"/>
</dbReference>
<dbReference type="InterPro" id="IPR050289">
    <property type="entry name" value="TorD/DmsD_chaperones"/>
</dbReference>
<dbReference type="NCBIfam" id="NF003442">
    <property type="entry name" value="PRK04976.1"/>
    <property type="match status" value="1"/>
</dbReference>
<dbReference type="PANTHER" id="PTHR34227:SF11">
    <property type="entry name" value="CHAPERONE PROTEIN TORD"/>
    <property type="match status" value="1"/>
</dbReference>
<dbReference type="PANTHER" id="PTHR34227">
    <property type="entry name" value="CHAPERONE PROTEIN YCDY"/>
    <property type="match status" value="1"/>
</dbReference>
<dbReference type="Pfam" id="PF02613">
    <property type="entry name" value="Nitrate_red_del"/>
    <property type="match status" value="1"/>
</dbReference>
<dbReference type="SUPFAM" id="SSF89155">
    <property type="entry name" value="TorD-like"/>
    <property type="match status" value="1"/>
</dbReference>
<protein>
    <recommendedName>
        <fullName evidence="1">Chaperone protein TorD</fullName>
    </recommendedName>
</protein>
<sequence>MSNVDINHARALVYQLLSSLFAREIDEQRLKQLTSEQAQQFWTQLGYAPEFSASVASIQKVLNGLTSDEALLELAADYCGLFLVGTKHSASPYASLYLNREEEPLLFGQQHQQMSEFLHQSKLQVQSHFPEPADHLAVILAYMGHLACHSEDAAQLSFLNACIDSWLAKFVAKVVECDSKHSNGFYSALATLTLAWVQQDKQQLEQAMH</sequence>
<reference key="1">
    <citation type="submission" date="2006-09" db="EMBL/GenBank/DDBJ databases">
        <title>Complete sequence of chromosome 1 of Shewanella sp. ANA-3.</title>
        <authorList>
            <person name="Copeland A."/>
            <person name="Lucas S."/>
            <person name="Lapidus A."/>
            <person name="Barry K."/>
            <person name="Detter J.C."/>
            <person name="Glavina del Rio T."/>
            <person name="Hammon N."/>
            <person name="Israni S."/>
            <person name="Dalin E."/>
            <person name="Tice H."/>
            <person name="Pitluck S."/>
            <person name="Chertkov O."/>
            <person name="Brettin T."/>
            <person name="Bruce D."/>
            <person name="Han C."/>
            <person name="Tapia R."/>
            <person name="Gilna P."/>
            <person name="Schmutz J."/>
            <person name="Larimer F."/>
            <person name="Land M."/>
            <person name="Hauser L."/>
            <person name="Kyrpides N."/>
            <person name="Kim E."/>
            <person name="Newman D."/>
            <person name="Salticov C."/>
            <person name="Konstantinidis K."/>
            <person name="Klappenback J."/>
            <person name="Tiedje J."/>
            <person name="Richardson P."/>
        </authorList>
    </citation>
    <scope>NUCLEOTIDE SEQUENCE [LARGE SCALE GENOMIC DNA]</scope>
    <source>
        <strain>ANA-3</strain>
    </source>
</reference>
<proteinExistence type="inferred from homology"/>
<comment type="function">
    <text evidence="1">Involved in the biogenesis of TorA. Acts on TorA before the insertion of the molybdenum cofactor and, as a result, probably favors a conformation of the apoenzyme that is competent for acquiring the cofactor.</text>
</comment>
<comment type="subcellular location">
    <subcellularLocation>
        <location evidence="1">Cytoplasm</location>
    </subcellularLocation>
</comment>
<comment type="similarity">
    <text evidence="1">Belongs to the TorD/DmsD family. TorD subfamily.</text>
</comment>
<feature type="chain" id="PRO_1000065506" description="Chaperone protein TorD">
    <location>
        <begin position="1"/>
        <end position="209"/>
    </location>
</feature>
<name>TORD_SHESA</name>
<keyword id="KW-0143">Chaperone</keyword>
<keyword id="KW-0963">Cytoplasm</keyword>
<evidence type="ECO:0000255" key="1">
    <source>
        <dbReference type="HAMAP-Rule" id="MF_01150"/>
    </source>
</evidence>
<gene>
    <name evidence="1" type="primary">torD</name>
    <name type="ordered locus">Shewana3_1054</name>
</gene>
<accession>A0KU20</accession>
<organism>
    <name type="scientific">Shewanella sp. (strain ANA-3)</name>
    <dbReference type="NCBI Taxonomy" id="94122"/>
    <lineage>
        <taxon>Bacteria</taxon>
        <taxon>Pseudomonadati</taxon>
        <taxon>Pseudomonadota</taxon>
        <taxon>Gammaproteobacteria</taxon>
        <taxon>Alteromonadales</taxon>
        <taxon>Shewanellaceae</taxon>
        <taxon>Shewanella</taxon>
    </lineage>
</organism>